<accession>Q753D4</accession>
<keyword id="KW-0507">mRNA processing</keyword>
<keyword id="KW-0508">mRNA splicing</keyword>
<keyword id="KW-0539">Nucleus</keyword>
<keyword id="KW-1185">Reference proteome</keyword>
<keyword id="KW-0747">Spliceosome</keyword>
<proteinExistence type="inferred from homology"/>
<protein>
    <recommendedName>
        <fullName>Pre-mRNA-splicing factor RSE1</fullName>
    </recommendedName>
</protein>
<feature type="chain" id="PRO_0000218625" description="Pre-mRNA-splicing factor RSE1">
    <location>
        <begin position="1"/>
        <end position="1288"/>
    </location>
</feature>
<feature type="region of interest" description="Disordered" evidence="2">
    <location>
        <begin position="725"/>
        <end position="744"/>
    </location>
</feature>
<feature type="compositionally biased region" description="Acidic residues" evidence="2">
    <location>
        <begin position="725"/>
        <end position="740"/>
    </location>
</feature>
<organism>
    <name type="scientific">Eremothecium gossypii (strain ATCC 10895 / CBS 109.51 / FGSC 9923 / NRRL Y-1056)</name>
    <name type="common">Yeast</name>
    <name type="synonym">Ashbya gossypii</name>
    <dbReference type="NCBI Taxonomy" id="284811"/>
    <lineage>
        <taxon>Eukaryota</taxon>
        <taxon>Fungi</taxon>
        <taxon>Dikarya</taxon>
        <taxon>Ascomycota</taxon>
        <taxon>Saccharomycotina</taxon>
        <taxon>Saccharomycetes</taxon>
        <taxon>Saccharomycetales</taxon>
        <taxon>Saccharomycetaceae</taxon>
        <taxon>Eremothecium</taxon>
    </lineage>
</organism>
<evidence type="ECO:0000250" key="1"/>
<evidence type="ECO:0000256" key="2">
    <source>
        <dbReference type="SAM" id="MobiDB-lite"/>
    </source>
</evidence>
<evidence type="ECO:0000305" key="3"/>
<reference key="1">
    <citation type="journal article" date="2004" name="Science">
        <title>The Ashbya gossypii genome as a tool for mapping the ancient Saccharomyces cerevisiae genome.</title>
        <authorList>
            <person name="Dietrich F.S."/>
            <person name="Voegeli S."/>
            <person name="Brachat S."/>
            <person name="Lerch A."/>
            <person name="Gates K."/>
            <person name="Steiner S."/>
            <person name="Mohr C."/>
            <person name="Poehlmann R."/>
            <person name="Luedi P."/>
            <person name="Choi S."/>
            <person name="Wing R.A."/>
            <person name="Flavier A."/>
            <person name="Gaffney T.D."/>
            <person name="Philippsen P."/>
        </authorList>
    </citation>
    <scope>NUCLEOTIDE SEQUENCE [LARGE SCALE GENOMIC DNA]</scope>
    <source>
        <strain>ATCC 10895 / CBS 109.51 / FGSC 9923 / NRRL Y-1056</strain>
    </source>
</reference>
<reference key="2">
    <citation type="journal article" date="2013" name="G3 (Bethesda)">
        <title>Genomes of Ashbya fungi isolated from insects reveal four mating-type loci, numerous translocations, lack of transposons, and distinct gene duplications.</title>
        <authorList>
            <person name="Dietrich F.S."/>
            <person name="Voegeli S."/>
            <person name="Kuo S."/>
            <person name="Philippsen P."/>
        </authorList>
    </citation>
    <scope>GENOME REANNOTATION</scope>
    <scope>SEQUENCE REVISION TO 1128-1129</scope>
    <source>
        <strain>ATCC 10895 / CBS 109.51 / FGSC 9923 / NRRL Y-1056</strain>
    </source>
</reference>
<dbReference type="EMBL" id="AE016819">
    <property type="protein sequence ID" value="AAS53753.2"/>
    <property type="molecule type" value="Genomic_DNA"/>
</dbReference>
<dbReference type="RefSeq" id="NP_985929.2">
    <property type="nucleotide sequence ID" value="NM_211284.2"/>
</dbReference>
<dbReference type="SMR" id="Q753D4"/>
<dbReference type="FunCoup" id="Q753D4">
    <property type="interactions" value="1396"/>
</dbReference>
<dbReference type="STRING" id="284811.Q753D4"/>
<dbReference type="EnsemblFungi" id="AAS53753">
    <property type="protein sequence ID" value="AAS53753"/>
    <property type="gene ID" value="AGOS_AFR382W"/>
</dbReference>
<dbReference type="GeneID" id="4622200"/>
<dbReference type="KEGG" id="ago:AGOS_AFR382W"/>
<dbReference type="eggNOG" id="KOG1898">
    <property type="taxonomic scope" value="Eukaryota"/>
</dbReference>
<dbReference type="HOGENOM" id="CLU_003246_0_1_1"/>
<dbReference type="InParanoid" id="Q753D4"/>
<dbReference type="OMA" id="PRATGHW"/>
<dbReference type="OrthoDB" id="436637at2759"/>
<dbReference type="Proteomes" id="UP000000591">
    <property type="component" value="Chromosome VI"/>
</dbReference>
<dbReference type="GO" id="GO:0005634">
    <property type="term" value="C:nucleus"/>
    <property type="evidence" value="ECO:0000318"/>
    <property type="project" value="GO_Central"/>
</dbReference>
<dbReference type="GO" id="GO:0000974">
    <property type="term" value="C:Prp19 complex"/>
    <property type="evidence" value="ECO:0007669"/>
    <property type="project" value="EnsemblFungi"/>
</dbReference>
<dbReference type="GO" id="GO:0005686">
    <property type="term" value="C:U2 snRNP"/>
    <property type="evidence" value="ECO:0000318"/>
    <property type="project" value="GO_Central"/>
</dbReference>
<dbReference type="GO" id="GO:0071004">
    <property type="term" value="C:U2-type prespliceosome"/>
    <property type="evidence" value="ECO:0007669"/>
    <property type="project" value="EnsemblFungi"/>
</dbReference>
<dbReference type="GO" id="GO:0030620">
    <property type="term" value="F:U2 snRNA binding"/>
    <property type="evidence" value="ECO:0000318"/>
    <property type="project" value="GO_Central"/>
</dbReference>
<dbReference type="GO" id="GO:0000398">
    <property type="term" value="P:mRNA splicing, via spliceosome"/>
    <property type="evidence" value="ECO:0000318"/>
    <property type="project" value="GO_Central"/>
</dbReference>
<dbReference type="GO" id="GO:0000245">
    <property type="term" value="P:spliceosomal complex assembly"/>
    <property type="evidence" value="ECO:0007669"/>
    <property type="project" value="EnsemblFungi"/>
</dbReference>
<dbReference type="Gene3D" id="2.130.10.10">
    <property type="entry name" value="YVTN repeat-like/Quinoprotein amine dehydrogenase"/>
    <property type="match status" value="2"/>
</dbReference>
<dbReference type="InterPro" id="IPR018846">
    <property type="entry name" value="Beta-prop_RSE1/DDB1/CPSF1_1st"/>
</dbReference>
<dbReference type="InterPro" id="IPR004871">
    <property type="entry name" value="Cleavage/polyA-sp_fac_asu_C"/>
</dbReference>
<dbReference type="InterPro" id="IPR050358">
    <property type="entry name" value="RSE1/DDB1/CFT1/CPSF1"/>
</dbReference>
<dbReference type="InterPro" id="IPR015943">
    <property type="entry name" value="WD40/YVTN_repeat-like_dom_sf"/>
</dbReference>
<dbReference type="InterPro" id="IPR036322">
    <property type="entry name" value="WD40_repeat_dom_sf"/>
</dbReference>
<dbReference type="PANTHER" id="PTHR10644">
    <property type="entry name" value="DNA REPAIR/RNA PROCESSING CPSF FAMILY"/>
    <property type="match status" value="1"/>
</dbReference>
<dbReference type="Pfam" id="PF10433">
    <property type="entry name" value="Beta-prop_RSE1_1st"/>
    <property type="match status" value="1"/>
</dbReference>
<dbReference type="Pfam" id="PF23726">
    <property type="entry name" value="Beta-prop_RSE1_2nd"/>
    <property type="match status" value="1"/>
</dbReference>
<dbReference type="Pfam" id="PF03178">
    <property type="entry name" value="CPSF_A"/>
    <property type="match status" value="1"/>
</dbReference>
<dbReference type="SUPFAM" id="SSF69322">
    <property type="entry name" value="Tricorn protease domain 2"/>
    <property type="match status" value="1"/>
</dbReference>
<dbReference type="SUPFAM" id="SSF50978">
    <property type="entry name" value="WD40 repeat-like"/>
    <property type="match status" value="1"/>
</dbReference>
<gene>
    <name type="primary">RSE1</name>
    <name type="ordered locus">AFR382W</name>
</gene>
<sequence>MNEKEELHLYHVSLQKQRNYVHSCIGHFVDYRHHHIRAQGGSVEGGKKGSKWRKQLQICMATQTQVELYDVEEGRLRRLFTRTVFGTITGLSSVVADGRSVLIVVGDSGKMSVLRFKYEGGRVRLEALFNEPLSRSGVRRLSPQAHVSVDPQGRCVLLSAMERNKVCYLMDVKQGELQVSSPLEANRPNYVTMQTAACDVAFDNPIFASLEIDLADGAKYLFFYMLDLGLNHMAKVADFELGDGSANFIMSVPDLEQYGINTKAGGPDDGDPDAIVPFVLMGFDNYVSLKDLRGRYDINVQIPTRKLSQKTIITAGTVQKLKRDFFMLLQSNHGDLYKVKILPDEKTASPVVTISYFDTIPQAQNLHIFKHGYMFANSEYGNSYLYQFENLDDEEESMLTSVMPGRRLIIEPRTVLKNLLVADKLALVNPILSSQLTERVPLTIATSTLGDVRLFTAGVNFMDIISSPLPAAPLDIWTVATNGSRFHKLLFIALQESTMILKIAAGTVEELELPHNPFVIAQDKTVLIAHMGGQSIIQVTENKMVHIIENRDESYESKLEWFPPAGICILKASSNSTQLILALSNNEVVYFEIGSNESLNELQDRIEVEERITALAIGNGNRSDYMIIASVDSTVKVYSLKVQDQANFLEVVSMQVLVSPASSLQLASSGGSLCLHIGLDSGVYVRSKLDRNTGELFDVRTKYLGTKPVEISLLLDMNPYINEEVDDEGEEEEEQDDEESLGGPHSRLVPCVVLHSGKTWISYELDSSLFIRPLLNDQSLKRVAQFTSNEIQRNGCCSISSAGFLVIGRIGTFRNNDCWFQESSLALPDSEDSVNGNELENDEKDPDALLEEKQKVNSSIGKLIIPDPDDIKLFYYCEYNEVENSCRVSLFKQGISYKHENSTEAFQLIPDCRPSTATIARFGLDMKHLVISTVNGVLKTFVIRITKAANNRRFELLALHDTVAGSTIHAMCPFHDKLLVPLANAVVLYGLGKKQLLKKSISYLPTSITKIVALDQWNGTRVAVGDIHESVTLLHFDERKNQFIPVADDVTKRHVTVVKFVDECTVIGGDRFGNIWLLRLPLEYDRLIKEGVDSYLLTLNTGIPSNIRECVFKWQLLNHFYINDIPMSFHLIASPQMADRASILYAGLQGTIGYLIPLITRREIEFFDLLEQAMRDADHLFYLDQENRLNDTSELNDGADEEGSVIDRRFPSVQKKRKIPEGAYSLVGRDAMMYRSYYNPVRHVTDGDLCEQFLELYPSEKNFLAARVDNRSVQEIERRINDMRTNCM</sequence>
<comment type="function">
    <text evidence="1">Involved in pre-mRNA splicing and cell cycle control.</text>
</comment>
<comment type="subunit">
    <text evidence="1">Associated with the spliceosome.</text>
</comment>
<comment type="subcellular location">
    <subcellularLocation>
        <location evidence="1">Nucleus</location>
    </subcellularLocation>
</comment>
<comment type="similarity">
    <text evidence="3">Belongs to the RSE1 family.</text>
</comment>
<name>RSE1_EREGS</name>